<name>TX31E_SCOMU</name>
<evidence type="ECO:0000250" key="1"/>
<evidence type="ECO:0000250" key="2">
    <source>
        <dbReference type="UniProtKB" id="I6RU32"/>
    </source>
</evidence>
<evidence type="ECO:0000303" key="3">
    <source>
    </source>
</evidence>
<evidence type="ECO:0000305" key="4"/>
<evidence type="ECO:0000305" key="5">
    <source>
    </source>
</evidence>
<feature type="signal peptide" evidence="2">
    <location>
        <begin position="1"/>
        <end position="23"/>
    </location>
</feature>
<feature type="chain" id="PRO_0000425473" description="Kappa-scoloptoxin(03)-Ssm1e" evidence="2">
    <location>
        <begin position="24"/>
        <end position="75"/>
    </location>
</feature>
<proteinExistence type="inferred from homology"/>
<dbReference type="EMBL" id="JQ757072">
    <property type="protein sequence ID" value="AFM55019.1"/>
    <property type="molecule type" value="mRNA"/>
</dbReference>
<dbReference type="SMR" id="I6RA73"/>
<dbReference type="GO" id="GO:0005576">
    <property type="term" value="C:extracellular region"/>
    <property type="evidence" value="ECO:0007669"/>
    <property type="project" value="UniProtKB-SubCell"/>
</dbReference>
<dbReference type="GO" id="GO:0015459">
    <property type="term" value="F:potassium channel regulator activity"/>
    <property type="evidence" value="ECO:0007669"/>
    <property type="project" value="UniProtKB-KW"/>
</dbReference>
<dbReference type="GO" id="GO:0090729">
    <property type="term" value="F:toxin activity"/>
    <property type="evidence" value="ECO:0007669"/>
    <property type="project" value="UniProtKB-KW"/>
</dbReference>
<dbReference type="Gene3D" id="1.10.60.50">
    <property type="match status" value="1"/>
</dbReference>
<reference key="1">
    <citation type="journal article" date="2012" name="Mol. Cell. Proteomics">
        <title>Chemical punch packed in venoms makes centipedes excellent predators.</title>
        <authorList>
            <person name="Yang S."/>
            <person name="Liu Z."/>
            <person name="Xiao Y."/>
            <person name="Li Y."/>
            <person name="Rong M."/>
            <person name="Liang S."/>
            <person name="Zhang Z."/>
            <person name="Yu H."/>
            <person name="King G.F."/>
            <person name="Lai R."/>
        </authorList>
    </citation>
    <scope>NUCLEOTIDE SEQUENCE [MRNA]</scope>
    <source>
        <tissue>Venom gland</tissue>
    </source>
</reference>
<keyword id="KW-1015">Disulfide bond</keyword>
<keyword id="KW-0872">Ion channel impairing toxin</keyword>
<keyword id="KW-0528">Neurotoxin</keyword>
<keyword id="KW-0632">Potassium channel impairing toxin</keyword>
<keyword id="KW-0964">Secreted</keyword>
<keyword id="KW-0732">Signal</keyword>
<keyword id="KW-0800">Toxin</keyword>
<keyword id="KW-1220">Voltage-gated potassium channel impairing toxin</keyword>
<accession>I6RA73</accession>
<protein>
    <recommendedName>
        <fullName evidence="4">Kappa-scoloptoxin(03)-Ssm1e</fullName>
        <shortName evidence="4">Kappa-SLPTX(03)-Ssm1e</shortName>
    </recommendedName>
    <alternativeName>
        <fullName evidence="3">Kappa-scoloptoxin-Ssm1e</fullName>
        <shortName evidence="3">Kappa-SLPTX-Ssm1e</shortName>
    </alternativeName>
</protein>
<sequence>MKSSMAILLVMALIIFTLDKNYSTAKDLPSCEKGIHRKVTCKQCNKRSDNDDDYTKCCNSFDAFLMCGFLLSKES</sequence>
<organism>
    <name type="scientific">Scolopendra mutilans</name>
    <name type="common">Chinese red-headed centipede</name>
    <name type="synonym">Scolopendra subspinipes mutilans</name>
    <dbReference type="NCBI Taxonomy" id="2836329"/>
    <lineage>
        <taxon>Eukaryota</taxon>
        <taxon>Metazoa</taxon>
        <taxon>Ecdysozoa</taxon>
        <taxon>Arthropoda</taxon>
        <taxon>Myriapoda</taxon>
        <taxon>Chilopoda</taxon>
        <taxon>Pleurostigmophora</taxon>
        <taxon>Scolopendromorpha</taxon>
        <taxon>Scolopendridae</taxon>
        <taxon>Scolopendra</taxon>
    </lineage>
</organism>
<comment type="function">
    <text evidence="1">Inhibits voltage-gated potassium channels.</text>
</comment>
<comment type="subcellular location">
    <subcellularLocation>
        <location evidence="5">Secreted</location>
    </subcellularLocation>
</comment>
<comment type="tissue specificity">
    <text evidence="5">Expressed by the venom gland.</text>
</comment>
<comment type="PTM">
    <text evidence="4">Contains 3 disulfide bonds.</text>
</comment>
<comment type="similarity">
    <text evidence="4">Belongs to the scoloptoxin-03 family.</text>
</comment>